<proteinExistence type="inferred from homology"/>
<comment type="function">
    <text evidence="1">One of the primary rRNA binding proteins, it binds directly to 16S rRNA where it nucleates assembly of the body of the 30S subunit.</text>
</comment>
<comment type="function">
    <text evidence="1">With S5 and S12 plays an important role in translational accuracy.</text>
</comment>
<comment type="subunit">
    <text evidence="1">Part of the 30S ribosomal subunit. Contacts protein S5. The interaction surface between S4 and S5 is involved in control of translational fidelity.</text>
</comment>
<comment type="similarity">
    <text evidence="1">Belongs to the universal ribosomal protein uS4 family.</text>
</comment>
<accession>Q1BD09</accession>
<keyword id="KW-0687">Ribonucleoprotein</keyword>
<keyword id="KW-0689">Ribosomal protein</keyword>
<keyword id="KW-0694">RNA-binding</keyword>
<keyword id="KW-0699">rRNA-binding</keyword>
<gene>
    <name evidence="1" type="primary">rpsD</name>
    <name type="ordered locus">Mmcs_1112</name>
</gene>
<reference key="1">
    <citation type="submission" date="2006-06" db="EMBL/GenBank/DDBJ databases">
        <title>Complete sequence of chromosome of Mycobacterium sp. MCS.</title>
        <authorList>
            <consortium name="US DOE Joint Genome Institute"/>
            <person name="Copeland A."/>
            <person name="Lucas S."/>
            <person name="Lapidus A."/>
            <person name="Barry K."/>
            <person name="Detter J.C."/>
            <person name="Glavina del Rio T."/>
            <person name="Hammon N."/>
            <person name="Israni S."/>
            <person name="Dalin E."/>
            <person name="Tice H."/>
            <person name="Pitluck S."/>
            <person name="Martinez M."/>
            <person name="Schmutz J."/>
            <person name="Larimer F."/>
            <person name="Land M."/>
            <person name="Hauser L."/>
            <person name="Kyrpides N."/>
            <person name="Kim E."/>
            <person name="Miller C.D."/>
            <person name="Hughes J.E."/>
            <person name="Anderson A.J."/>
            <person name="Sims R.C."/>
            <person name="Richardson P."/>
        </authorList>
    </citation>
    <scope>NUCLEOTIDE SEQUENCE [LARGE SCALE GENOMIC DNA]</scope>
    <source>
        <strain>MCS</strain>
    </source>
</reference>
<organism>
    <name type="scientific">Mycobacterium sp. (strain MCS)</name>
    <dbReference type="NCBI Taxonomy" id="164756"/>
    <lineage>
        <taxon>Bacteria</taxon>
        <taxon>Bacillati</taxon>
        <taxon>Actinomycetota</taxon>
        <taxon>Actinomycetes</taxon>
        <taxon>Mycobacteriales</taxon>
        <taxon>Mycobacteriaceae</taxon>
        <taxon>Mycobacterium</taxon>
    </lineage>
</organism>
<evidence type="ECO:0000255" key="1">
    <source>
        <dbReference type="HAMAP-Rule" id="MF_01306"/>
    </source>
</evidence>
<evidence type="ECO:0000256" key="2">
    <source>
        <dbReference type="SAM" id="MobiDB-lite"/>
    </source>
</evidence>
<evidence type="ECO:0000305" key="3"/>
<protein>
    <recommendedName>
        <fullName evidence="1">Small ribosomal subunit protein uS4</fullName>
    </recommendedName>
    <alternativeName>
        <fullName evidence="3">30S ribosomal protein S4</fullName>
    </alternativeName>
</protein>
<dbReference type="EMBL" id="CP000384">
    <property type="protein sequence ID" value="ABG07225.1"/>
    <property type="molecule type" value="Genomic_DNA"/>
</dbReference>
<dbReference type="SMR" id="Q1BD09"/>
<dbReference type="KEGG" id="mmc:Mmcs_1112"/>
<dbReference type="HOGENOM" id="CLU_092403_0_2_11"/>
<dbReference type="BioCyc" id="MSP164756:G1G6O-1138-MONOMER"/>
<dbReference type="GO" id="GO:0015935">
    <property type="term" value="C:small ribosomal subunit"/>
    <property type="evidence" value="ECO:0007669"/>
    <property type="project" value="InterPro"/>
</dbReference>
<dbReference type="GO" id="GO:0019843">
    <property type="term" value="F:rRNA binding"/>
    <property type="evidence" value="ECO:0007669"/>
    <property type="project" value="UniProtKB-UniRule"/>
</dbReference>
<dbReference type="GO" id="GO:0003735">
    <property type="term" value="F:structural constituent of ribosome"/>
    <property type="evidence" value="ECO:0007669"/>
    <property type="project" value="InterPro"/>
</dbReference>
<dbReference type="GO" id="GO:0042274">
    <property type="term" value="P:ribosomal small subunit biogenesis"/>
    <property type="evidence" value="ECO:0007669"/>
    <property type="project" value="TreeGrafter"/>
</dbReference>
<dbReference type="GO" id="GO:0006412">
    <property type="term" value="P:translation"/>
    <property type="evidence" value="ECO:0007669"/>
    <property type="project" value="UniProtKB-UniRule"/>
</dbReference>
<dbReference type="CDD" id="cd00165">
    <property type="entry name" value="S4"/>
    <property type="match status" value="1"/>
</dbReference>
<dbReference type="FunFam" id="1.10.1050.10:FF:000001">
    <property type="entry name" value="30S ribosomal protein S4"/>
    <property type="match status" value="1"/>
</dbReference>
<dbReference type="FunFam" id="3.10.290.10:FF:000001">
    <property type="entry name" value="30S ribosomal protein S4"/>
    <property type="match status" value="1"/>
</dbReference>
<dbReference type="Gene3D" id="1.10.1050.10">
    <property type="entry name" value="Ribosomal Protein S4 Delta 41, Chain A, domain 1"/>
    <property type="match status" value="1"/>
</dbReference>
<dbReference type="Gene3D" id="3.10.290.10">
    <property type="entry name" value="RNA-binding S4 domain"/>
    <property type="match status" value="1"/>
</dbReference>
<dbReference type="HAMAP" id="MF_01306_B">
    <property type="entry name" value="Ribosomal_uS4_B"/>
    <property type="match status" value="1"/>
</dbReference>
<dbReference type="InterPro" id="IPR022801">
    <property type="entry name" value="Ribosomal_uS4"/>
</dbReference>
<dbReference type="InterPro" id="IPR005709">
    <property type="entry name" value="Ribosomal_uS4_bac-type"/>
</dbReference>
<dbReference type="InterPro" id="IPR018079">
    <property type="entry name" value="Ribosomal_uS4_CS"/>
</dbReference>
<dbReference type="InterPro" id="IPR001912">
    <property type="entry name" value="Ribosomal_uS4_N"/>
</dbReference>
<dbReference type="InterPro" id="IPR002942">
    <property type="entry name" value="S4_RNA-bd"/>
</dbReference>
<dbReference type="InterPro" id="IPR036986">
    <property type="entry name" value="S4_RNA-bd_sf"/>
</dbReference>
<dbReference type="NCBIfam" id="NF003717">
    <property type="entry name" value="PRK05327.1"/>
    <property type="match status" value="1"/>
</dbReference>
<dbReference type="NCBIfam" id="TIGR01017">
    <property type="entry name" value="rpsD_bact"/>
    <property type="match status" value="1"/>
</dbReference>
<dbReference type="PANTHER" id="PTHR11831">
    <property type="entry name" value="30S 40S RIBOSOMAL PROTEIN"/>
    <property type="match status" value="1"/>
</dbReference>
<dbReference type="PANTHER" id="PTHR11831:SF4">
    <property type="entry name" value="SMALL RIBOSOMAL SUBUNIT PROTEIN US4M"/>
    <property type="match status" value="1"/>
</dbReference>
<dbReference type="Pfam" id="PF00163">
    <property type="entry name" value="Ribosomal_S4"/>
    <property type="match status" value="1"/>
</dbReference>
<dbReference type="Pfam" id="PF01479">
    <property type="entry name" value="S4"/>
    <property type="match status" value="1"/>
</dbReference>
<dbReference type="SMART" id="SM01390">
    <property type="entry name" value="Ribosomal_S4"/>
    <property type="match status" value="1"/>
</dbReference>
<dbReference type="SMART" id="SM00363">
    <property type="entry name" value="S4"/>
    <property type="match status" value="1"/>
</dbReference>
<dbReference type="SUPFAM" id="SSF55174">
    <property type="entry name" value="Alpha-L RNA-binding motif"/>
    <property type="match status" value="1"/>
</dbReference>
<dbReference type="PROSITE" id="PS00632">
    <property type="entry name" value="RIBOSOMAL_S4"/>
    <property type="match status" value="1"/>
</dbReference>
<dbReference type="PROSITE" id="PS50889">
    <property type="entry name" value="S4"/>
    <property type="match status" value="1"/>
</dbReference>
<name>RS4_MYCSS</name>
<feature type="chain" id="PRO_0000293318" description="Small ribosomal subunit protein uS4">
    <location>
        <begin position="1"/>
        <end position="201"/>
    </location>
</feature>
<feature type="domain" description="S4 RNA-binding" evidence="1">
    <location>
        <begin position="91"/>
        <end position="157"/>
    </location>
</feature>
<feature type="region of interest" description="Disordered" evidence="2">
    <location>
        <begin position="1"/>
        <end position="38"/>
    </location>
</feature>
<sequence>MARYTGPATRKSRRLGVDLVGGDQSFEKRPYPPGQHGRARIKESEYRTQLQEKQKARFTYGVLEKQFRRYYDEANRQPGKTGDNLLRILESRLDNVVYRAGLARTRRMARQLVSHGHFTVNGVKVDIPSYRVSQYDIIDVREKSLNTDPFVIARETAGDRPIPSWLQVVGERQRILVHQLPERAQIDVPLTEQLIVELYSK</sequence>